<sequence>MNSIDPRAIIDPSAKLADGVEVGPWSIVGPDVEIGEGTVIGPHVVLKGPTRIGKHNRIFQFSSIGEDTPDLKYKGEPTRLVIGDHNVIREGVTIHRGTVQDRAETTVGDHNLIMAYAHIGHDSVIGNHCILVNNTALAGHVHVGDWAILSGYTLVHQYCHIGAHAFSGMGTAIGKDVPAFVTVFGSPAEARSMNFEGMRRRGFSDEVIHVLRRCYKIVYRQGLTVEDALKELAEPATQHPEVELFRQSILSSARGITR</sequence>
<organism>
    <name type="scientific">Pseudomonas putida (strain ATCC 47054 / DSM 6125 / CFBP 8728 / NCIMB 11950 / KT2440)</name>
    <dbReference type="NCBI Taxonomy" id="160488"/>
    <lineage>
        <taxon>Bacteria</taxon>
        <taxon>Pseudomonadati</taxon>
        <taxon>Pseudomonadota</taxon>
        <taxon>Gammaproteobacteria</taxon>
        <taxon>Pseudomonadales</taxon>
        <taxon>Pseudomonadaceae</taxon>
        <taxon>Pseudomonas</taxon>
    </lineage>
</organism>
<reference key="1">
    <citation type="journal article" date="2002" name="Environ. Microbiol.">
        <title>Complete genome sequence and comparative analysis of the metabolically versatile Pseudomonas putida KT2440.</title>
        <authorList>
            <person name="Nelson K.E."/>
            <person name="Weinel C."/>
            <person name="Paulsen I.T."/>
            <person name="Dodson R.J."/>
            <person name="Hilbert H."/>
            <person name="Martins dos Santos V.A.P."/>
            <person name="Fouts D.E."/>
            <person name="Gill S.R."/>
            <person name="Pop M."/>
            <person name="Holmes M."/>
            <person name="Brinkac L.M."/>
            <person name="Beanan M.J."/>
            <person name="DeBoy R.T."/>
            <person name="Daugherty S.C."/>
            <person name="Kolonay J.F."/>
            <person name="Madupu R."/>
            <person name="Nelson W.C."/>
            <person name="White O."/>
            <person name="Peterson J.D."/>
            <person name="Khouri H.M."/>
            <person name="Hance I."/>
            <person name="Chris Lee P."/>
            <person name="Holtzapple E.K."/>
            <person name="Scanlan D."/>
            <person name="Tran K."/>
            <person name="Moazzez A."/>
            <person name="Utterback T.R."/>
            <person name="Rizzo M."/>
            <person name="Lee K."/>
            <person name="Kosack D."/>
            <person name="Moestl D."/>
            <person name="Wedler H."/>
            <person name="Lauber J."/>
            <person name="Stjepandic D."/>
            <person name="Hoheisel J."/>
            <person name="Straetz M."/>
            <person name="Heim S."/>
            <person name="Kiewitz C."/>
            <person name="Eisen J.A."/>
            <person name="Timmis K.N."/>
            <person name="Duesterhoeft A."/>
            <person name="Tuemmler B."/>
            <person name="Fraser C.M."/>
        </authorList>
    </citation>
    <scope>NUCLEOTIDE SEQUENCE [LARGE SCALE GENOMIC DNA]</scope>
    <source>
        <strain>ATCC 47054 / DSM 6125 / CFBP 8728 / NCIMB 11950 / KT2440</strain>
    </source>
</reference>
<comment type="function">
    <text evidence="1">Involved in the biosynthesis of lipid A, a phosphorylated glycolipid that anchors the lipopolysaccharide to the outer membrane of the cell.</text>
</comment>
<comment type="catalytic activity">
    <reaction evidence="1">
        <text>a (3R)-hydroxyacyl-[ACP] + UDP-N-acetyl-alpha-D-glucosamine = a UDP-3-O-[(3R)-3-hydroxyacyl]-N-acetyl-alpha-D-glucosamine + holo-[ACP]</text>
        <dbReference type="Rhea" id="RHEA:67812"/>
        <dbReference type="Rhea" id="RHEA-COMP:9685"/>
        <dbReference type="Rhea" id="RHEA-COMP:9945"/>
        <dbReference type="ChEBI" id="CHEBI:57705"/>
        <dbReference type="ChEBI" id="CHEBI:64479"/>
        <dbReference type="ChEBI" id="CHEBI:78827"/>
        <dbReference type="ChEBI" id="CHEBI:173225"/>
        <dbReference type="EC" id="2.3.1.129"/>
    </reaction>
</comment>
<comment type="pathway">
    <text evidence="1">Glycolipid biosynthesis; lipid IV(A) biosynthesis; lipid IV(A) from (3R)-3-hydroxytetradecanoyl-[acyl-carrier-protein] and UDP-N-acetyl-alpha-D-glucosamine: step 1/6.</text>
</comment>
<comment type="subunit">
    <text evidence="1">Homotrimer.</text>
</comment>
<comment type="subcellular location">
    <subcellularLocation>
        <location evidence="1">Cytoplasm</location>
    </subcellularLocation>
</comment>
<comment type="similarity">
    <text evidence="1">Belongs to the transferase hexapeptide repeat family. LpxA subfamily.</text>
</comment>
<protein>
    <recommendedName>
        <fullName evidence="1">Acyl-[acyl-carrier-protein]--UDP-N-acetylglucosamine O-acyltransferase</fullName>
        <shortName evidence="1">UDP-N-acetylglucosamine acyltransferase</shortName>
        <ecNumber evidence="1">2.3.1.129</ecNumber>
    </recommendedName>
</protein>
<accession>Q88MG8</accession>
<evidence type="ECO:0000255" key="1">
    <source>
        <dbReference type="HAMAP-Rule" id="MF_00387"/>
    </source>
</evidence>
<feature type="chain" id="PRO_0000188059" description="Acyl-[acyl-carrier-protein]--UDP-N-acetylglucosamine O-acyltransferase">
    <location>
        <begin position="1"/>
        <end position="258"/>
    </location>
</feature>
<keyword id="KW-0012">Acyltransferase</keyword>
<keyword id="KW-0963">Cytoplasm</keyword>
<keyword id="KW-0441">Lipid A biosynthesis</keyword>
<keyword id="KW-0444">Lipid biosynthesis</keyword>
<keyword id="KW-0443">Lipid metabolism</keyword>
<keyword id="KW-1185">Reference proteome</keyword>
<keyword id="KW-0677">Repeat</keyword>
<keyword id="KW-0808">Transferase</keyword>
<gene>
    <name evidence="1" type="primary">lpxA</name>
    <name type="ordered locus">PP_1603</name>
</gene>
<proteinExistence type="inferred from homology"/>
<dbReference type="EC" id="2.3.1.129" evidence="1"/>
<dbReference type="EMBL" id="AE015451">
    <property type="protein sequence ID" value="AAN67224.1"/>
    <property type="molecule type" value="Genomic_DNA"/>
</dbReference>
<dbReference type="RefSeq" id="NP_743760.1">
    <property type="nucleotide sequence ID" value="NC_002947.4"/>
</dbReference>
<dbReference type="RefSeq" id="WP_010952681.1">
    <property type="nucleotide sequence ID" value="NZ_CP169744.1"/>
</dbReference>
<dbReference type="SMR" id="Q88MG8"/>
<dbReference type="STRING" id="160488.PP_1603"/>
<dbReference type="PaxDb" id="160488-PP_1603"/>
<dbReference type="GeneID" id="83681917"/>
<dbReference type="KEGG" id="ppu:PP_1603"/>
<dbReference type="PATRIC" id="fig|160488.4.peg.1694"/>
<dbReference type="eggNOG" id="COG1043">
    <property type="taxonomic scope" value="Bacteria"/>
</dbReference>
<dbReference type="HOGENOM" id="CLU_061249_0_0_6"/>
<dbReference type="OrthoDB" id="9807278at2"/>
<dbReference type="PhylomeDB" id="Q88MG8"/>
<dbReference type="BioCyc" id="PPUT160488:G1G01-1700-MONOMER"/>
<dbReference type="UniPathway" id="UPA00359">
    <property type="reaction ID" value="UER00477"/>
</dbReference>
<dbReference type="Proteomes" id="UP000000556">
    <property type="component" value="Chromosome"/>
</dbReference>
<dbReference type="GO" id="GO:0005737">
    <property type="term" value="C:cytoplasm"/>
    <property type="evidence" value="ECO:0007669"/>
    <property type="project" value="UniProtKB-SubCell"/>
</dbReference>
<dbReference type="GO" id="GO:0016020">
    <property type="term" value="C:membrane"/>
    <property type="evidence" value="ECO:0007669"/>
    <property type="project" value="GOC"/>
</dbReference>
<dbReference type="GO" id="GO:0008780">
    <property type="term" value="F:acyl-[acyl-carrier-protein]-UDP-N-acetylglucosamine O-acyltransferase activity"/>
    <property type="evidence" value="ECO:0007669"/>
    <property type="project" value="UniProtKB-UniRule"/>
</dbReference>
<dbReference type="GO" id="GO:0009245">
    <property type="term" value="P:lipid A biosynthetic process"/>
    <property type="evidence" value="ECO:0007669"/>
    <property type="project" value="UniProtKB-UniRule"/>
</dbReference>
<dbReference type="CDD" id="cd03351">
    <property type="entry name" value="LbH_UDP-GlcNAc_AT"/>
    <property type="match status" value="1"/>
</dbReference>
<dbReference type="FunFam" id="2.160.10.10:FF:000003">
    <property type="entry name" value="Acyl-[acyl-carrier-protein]--UDP-N-acetylglucosamine O-acyltransferase"/>
    <property type="match status" value="1"/>
</dbReference>
<dbReference type="Gene3D" id="2.160.10.10">
    <property type="entry name" value="Hexapeptide repeat proteins"/>
    <property type="match status" value="1"/>
</dbReference>
<dbReference type="Gene3D" id="1.20.1180.10">
    <property type="entry name" value="Udp N-acetylglucosamine O-acyltransferase, C-terminal domain"/>
    <property type="match status" value="1"/>
</dbReference>
<dbReference type="HAMAP" id="MF_00387">
    <property type="entry name" value="LpxA"/>
    <property type="match status" value="1"/>
</dbReference>
<dbReference type="InterPro" id="IPR029098">
    <property type="entry name" value="Acetyltransf_C"/>
</dbReference>
<dbReference type="InterPro" id="IPR037157">
    <property type="entry name" value="Acetyltransf_C_sf"/>
</dbReference>
<dbReference type="InterPro" id="IPR001451">
    <property type="entry name" value="Hexapep"/>
</dbReference>
<dbReference type="InterPro" id="IPR018357">
    <property type="entry name" value="Hexapep_transf_CS"/>
</dbReference>
<dbReference type="InterPro" id="IPR010137">
    <property type="entry name" value="Lipid_A_LpxA"/>
</dbReference>
<dbReference type="InterPro" id="IPR011004">
    <property type="entry name" value="Trimer_LpxA-like_sf"/>
</dbReference>
<dbReference type="NCBIfam" id="TIGR01852">
    <property type="entry name" value="lipid_A_lpxA"/>
    <property type="match status" value="1"/>
</dbReference>
<dbReference type="NCBIfam" id="NF003657">
    <property type="entry name" value="PRK05289.1"/>
    <property type="match status" value="1"/>
</dbReference>
<dbReference type="PANTHER" id="PTHR43480">
    <property type="entry name" value="ACYL-[ACYL-CARRIER-PROTEIN]--UDP-N-ACETYLGLUCOSAMINE O-ACYLTRANSFERASE"/>
    <property type="match status" value="1"/>
</dbReference>
<dbReference type="PANTHER" id="PTHR43480:SF1">
    <property type="entry name" value="ACYL-[ACYL-CARRIER-PROTEIN]--UDP-N-ACETYLGLUCOSAMINE O-ACYLTRANSFERASE, MITOCHONDRIAL-RELATED"/>
    <property type="match status" value="1"/>
</dbReference>
<dbReference type="Pfam" id="PF13720">
    <property type="entry name" value="Acetyltransf_11"/>
    <property type="match status" value="1"/>
</dbReference>
<dbReference type="Pfam" id="PF00132">
    <property type="entry name" value="Hexapep"/>
    <property type="match status" value="2"/>
</dbReference>
<dbReference type="PIRSF" id="PIRSF000456">
    <property type="entry name" value="UDP-GlcNAc_acltr"/>
    <property type="match status" value="1"/>
</dbReference>
<dbReference type="SUPFAM" id="SSF51161">
    <property type="entry name" value="Trimeric LpxA-like enzymes"/>
    <property type="match status" value="1"/>
</dbReference>
<dbReference type="PROSITE" id="PS00101">
    <property type="entry name" value="HEXAPEP_TRANSFERASES"/>
    <property type="match status" value="1"/>
</dbReference>
<name>LPXA_PSEPK</name>